<name>RL10_PSEPG</name>
<feature type="chain" id="PRO_1000079555" description="Large ribosomal subunit protein uL10">
    <location>
        <begin position="1"/>
        <end position="166"/>
    </location>
</feature>
<dbReference type="EMBL" id="CP000926">
    <property type="protein sequence ID" value="ABY96386.1"/>
    <property type="molecule type" value="Genomic_DNA"/>
</dbReference>
<dbReference type="RefSeq" id="WP_003255497.1">
    <property type="nucleotide sequence ID" value="NC_010322.1"/>
</dbReference>
<dbReference type="GeneID" id="83677743"/>
<dbReference type="KEGG" id="ppg:PputGB1_0475"/>
<dbReference type="eggNOG" id="COG0244">
    <property type="taxonomic scope" value="Bacteria"/>
</dbReference>
<dbReference type="HOGENOM" id="CLU_092227_0_2_6"/>
<dbReference type="Proteomes" id="UP000002157">
    <property type="component" value="Chromosome"/>
</dbReference>
<dbReference type="GO" id="GO:0015934">
    <property type="term" value="C:large ribosomal subunit"/>
    <property type="evidence" value="ECO:0007669"/>
    <property type="project" value="InterPro"/>
</dbReference>
<dbReference type="GO" id="GO:0070180">
    <property type="term" value="F:large ribosomal subunit rRNA binding"/>
    <property type="evidence" value="ECO:0007669"/>
    <property type="project" value="UniProtKB-UniRule"/>
</dbReference>
<dbReference type="GO" id="GO:0003735">
    <property type="term" value="F:structural constituent of ribosome"/>
    <property type="evidence" value="ECO:0007669"/>
    <property type="project" value="InterPro"/>
</dbReference>
<dbReference type="GO" id="GO:0006412">
    <property type="term" value="P:translation"/>
    <property type="evidence" value="ECO:0007669"/>
    <property type="project" value="UniProtKB-UniRule"/>
</dbReference>
<dbReference type="CDD" id="cd05797">
    <property type="entry name" value="Ribosomal_L10"/>
    <property type="match status" value="1"/>
</dbReference>
<dbReference type="FunFam" id="3.30.70.1730:FF:000001">
    <property type="entry name" value="50S ribosomal protein L10"/>
    <property type="match status" value="1"/>
</dbReference>
<dbReference type="Gene3D" id="3.30.70.1730">
    <property type="match status" value="1"/>
</dbReference>
<dbReference type="Gene3D" id="6.10.250.2350">
    <property type="match status" value="1"/>
</dbReference>
<dbReference type="HAMAP" id="MF_00362">
    <property type="entry name" value="Ribosomal_uL10"/>
    <property type="match status" value="1"/>
</dbReference>
<dbReference type="InterPro" id="IPR001790">
    <property type="entry name" value="Ribosomal_uL10"/>
</dbReference>
<dbReference type="InterPro" id="IPR043141">
    <property type="entry name" value="Ribosomal_uL10-like_sf"/>
</dbReference>
<dbReference type="InterPro" id="IPR022973">
    <property type="entry name" value="Ribosomal_uL10_bac"/>
</dbReference>
<dbReference type="InterPro" id="IPR047865">
    <property type="entry name" value="Ribosomal_uL10_bac_type"/>
</dbReference>
<dbReference type="InterPro" id="IPR002363">
    <property type="entry name" value="Ribosomal_uL10_CS_bac"/>
</dbReference>
<dbReference type="NCBIfam" id="NF000955">
    <property type="entry name" value="PRK00099.1-1"/>
    <property type="match status" value="1"/>
</dbReference>
<dbReference type="PANTHER" id="PTHR11560">
    <property type="entry name" value="39S RIBOSOMAL PROTEIN L10, MITOCHONDRIAL"/>
    <property type="match status" value="1"/>
</dbReference>
<dbReference type="Pfam" id="PF00466">
    <property type="entry name" value="Ribosomal_L10"/>
    <property type="match status" value="1"/>
</dbReference>
<dbReference type="SUPFAM" id="SSF160369">
    <property type="entry name" value="Ribosomal protein L10-like"/>
    <property type="match status" value="1"/>
</dbReference>
<dbReference type="PROSITE" id="PS01109">
    <property type="entry name" value="RIBOSOMAL_L10"/>
    <property type="match status" value="1"/>
</dbReference>
<keyword id="KW-0687">Ribonucleoprotein</keyword>
<keyword id="KW-0689">Ribosomal protein</keyword>
<keyword id="KW-0694">RNA-binding</keyword>
<keyword id="KW-0699">rRNA-binding</keyword>
<comment type="function">
    <text evidence="1">Forms part of the ribosomal stalk, playing a central role in the interaction of the ribosome with GTP-bound translation factors.</text>
</comment>
<comment type="subunit">
    <text evidence="1">Part of the ribosomal stalk of the 50S ribosomal subunit. The N-terminus interacts with L11 and the large rRNA to form the base of the stalk. The C-terminus forms an elongated spine to which L12 dimers bind in a sequential fashion forming a multimeric L10(L12)X complex.</text>
</comment>
<comment type="similarity">
    <text evidence="1">Belongs to the universal ribosomal protein uL10 family.</text>
</comment>
<evidence type="ECO:0000255" key="1">
    <source>
        <dbReference type="HAMAP-Rule" id="MF_00362"/>
    </source>
</evidence>
<evidence type="ECO:0000305" key="2"/>
<organism>
    <name type="scientific">Pseudomonas putida (strain GB-1)</name>
    <dbReference type="NCBI Taxonomy" id="76869"/>
    <lineage>
        <taxon>Bacteria</taxon>
        <taxon>Pseudomonadati</taxon>
        <taxon>Pseudomonadota</taxon>
        <taxon>Gammaproteobacteria</taxon>
        <taxon>Pseudomonadales</taxon>
        <taxon>Pseudomonadaceae</taxon>
        <taxon>Pseudomonas</taxon>
    </lineage>
</organism>
<sequence>MAIKLEDKKAIVAEVNEAAKVALSAVVADARGVTVSAMTGLRKEAREAGVYVRVVRNTLLKRAVEGTEFSILNDAFKGPTLIAFSNEHPGAAARLFKEFAKGQDKFEIKAAAFDGNFIAANQIDVLATLPTRDEAIARLMSVIQGATSKLARTLAAIRDQKEATAA</sequence>
<gene>
    <name evidence="1" type="primary">rplJ</name>
    <name type="ordered locus">PputGB1_0475</name>
</gene>
<proteinExistence type="inferred from homology"/>
<accession>B0KK58</accession>
<reference key="1">
    <citation type="submission" date="2008-01" db="EMBL/GenBank/DDBJ databases">
        <title>Complete sequence of Pseudomonas putida GB-1.</title>
        <authorList>
            <consortium name="US DOE Joint Genome Institute"/>
            <person name="Copeland A."/>
            <person name="Lucas S."/>
            <person name="Lapidus A."/>
            <person name="Barry K."/>
            <person name="Glavina del Rio T."/>
            <person name="Dalin E."/>
            <person name="Tice H."/>
            <person name="Pitluck S."/>
            <person name="Bruce D."/>
            <person name="Goodwin L."/>
            <person name="Chertkov O."/>
            <person name="Brettin T."/>
            <person name="Detter J.C."/>
            <person name="Han C."/>
            <person name="Kuske C.R."/>
            <person name="Schmutz J."/>
            <person name="Larimer F."/>
            <person name="Land M."/>
            <person name="Hauser L."/>
            <person name="Kyrpides N."/>
            <person name="Kim E."/>
            <person name="McCarthy J.K."/>
            <person name="Richardson P."/>
        </authorList>
    </citation>
    <scope>NUCLEOTIDE SEQUENCE [LARGE SCALE GENOMIC DNA]</scope>
    <source>
        <strain>GB-1</strain>
    </source>
</reference>
<protein>
    <recommendedName>
        <fullName evidence="1">Large ribosomal subunit protein uL10</fullName>
    </recommendedName>
    <alternativeName>
        <fullName evidence="2">50S ribosomal protein L10</fullName>
    </alternativeName>
</protein>